<accession>Q6CBK1</accession>
<dbReference type="EC" id="2.7.7.-" evidence="2"/>
<dbReference type="EC" id="2.8.1.-" evidence="2"/>
<dbReference type="EMBL" id="CR382129">
    <property type="protein sequence ID" value="CAG82281.1"/>
    <property type="molecule type" value="Genomic_DNA"/>
</dbReference>
<dbReference type="RefSeq" id="XP_501961.1">
    <property type="nucleotide sequence ID" value="XM_501961.1"/>
</dbReference>
<dbReference type="SMR" id="Q6CBK1"/>
<dbReference type="FunCoup" id="Q6CBK1">
    <property type="interactions" value="863"/>
</dbReference>
<dbReference type="STRING" id="284591.Q6CBK1"/>
<dbReference type="EnsemblFungi" id="CAG82281">
    <property type="protein sequence ID" value="CAG82281"/>
    <property type="gene ID" value="YALI0_C18095g"/>
</dbReference>
<dbReference type="KEGG" id="yli:2909989"/>
<dbReference type="VEuPathDB" id="FungiDB:YALI0_C18095g"/>
<dbReference type="HOGENOM" id="CLU_013325_1_2_1"/>
<dbReference type="InParanoid" id="Q6CBK1"/>
<dbReference type="OMA" id="IPDVGMD"/>
<dbReference type="OrthoDB" id="117333at4891"/>
<dbReference type="UniPathway" id="UPA00988"/>
<dbReference type="Proteomes" id="UP000001300">
    <property type="component" value="Chromosome C"/>
</dbReference>
<dbReference type="GO" id="GO:0005737">
    <property type="term" value="C:cytoplasm"/>
    <property type="evidence" value="ECO:0000318"/>
    <property type="project" value="GO_Central"/>
</dbReference>
<dbReference type="GO" id="GO:0005829">
    <property type="term" value="C:cytosol"/>
    <property type="evidence" value="ECO:0007669"/>
    <property type="project" value="InterPro"/>
</dbReference>
<dbReference type="GO" id="GO:0070733">
    <property type="term" value="F:AMPylase activity"/>
    <property type="evidence" value="ECO:0007669"/>
    <property type="project" value="EnsemblFungi"/>
</dbReference>
<dbReference type="GO" id="GO:0005524">
    <property type="term" value="F:ATP binding"/>
    <property type="evidence" value="ECO:0007669"/>
    <property type="project" value="UniProtKB-KW"/>
</dbReference>
<dbReference type="GO" id="GO:0042802">
    <property type="term" value="F:identical protein binding"/>
    <property type="evidence" value="ECO:0007669"/>
    <property type="project" value="EnsemblFungi"/>
</dbReference>
<dbReference type="GO" id="GO:0046872">
    <property type="term" value="F:metal ion binding"/>
    <property type="evidence" value="ECO:0007669"/>
    <property type="project" value="UniProtKB-KW"/>
</dbReference>
<dbReference type="GO" id="GO:0016779">
    <property type="term" value="F:nucleotidyltransferase activity"/>
    <property type="evidence" value="ECO:0000318"/>
    <property type="project" value="GO_Central"/>
</dbReference>
<dbReference type="GO" id="GO:0004792">
    <property type="term" value="F:thiosulfate-cyanide sulfurtransferase activity"/>
    <property type="evidence" value="ECO:0000318"/>
    <property type="project" value="GO_Central"/>
</dbReference>
<dbReference type="GO" id="GO:0042292">
    <property type="term" value="F:URM1 activating enzyme activity"/>
    <property type="evidence" value="ECO:0000318"/>
    <property type="project" value="GO_Central"/>
</dbReference>
<dbReference type="GO" id="GO:0007114">
    <property type="term" value="P:cell budding"/>
    <property type="evidence" value="ECO:0007669"/>
    <property type="project" value="EnsemblFungi"/>
</dbReference>
<dbReference type="GO" id="GO:0034599">
    <property type="term" value="P:cellular response to oxidative stress"/>
    <property type="evidence" value="ECO:0007669"/>
    <property type="project" value="EnsemblFungi"/>
</dbReference>
<dbReference type="GO" id="GO:0001403">
    <property type="term" value="P:invasive growth in response to glucose limitation"/>
    <property type="evidence" value="ECO:0007669"/>
    <property type="project" value="EnsemblFungi"/>
</dbReference>
<dbReference type="GO" id="GO:0032447">
    <property type="term" value="P:protein urmylation"/>
    <property type="evidence" value="ECO:0000318"/>
    <property type="project" value="GO_Central"/>
</dbReference>
<dbReference type="GO" id="GO:2000220">
    <property type="term" value="P:regulation of pseudohyphal growth"/>
    <property type="evidence" value="ECO:0007669"/>
    <property type="project" value="EnsemblFungi"/>
</dbReference>
<dbReference type="GO" id="GO:0002143">
    <property type="term" value="P:tRNA wobble position uridine thiolation"/>
    <property type="evidence" value="ECO:0000318"/>
    <property type="project" value="GO_Central"/>
</dbReference>
<dbReference type="CDD" id="cd00757">
    <property type="entry name" value="ThiF_MoeB_HesA_family"/>
    <property type="match status" value="1"/>
</dbReference>
<dbReference type="FunFam" id="3.40.250.10:FF:000014">
    <property type="entry name" value="Adenylyltransferase and sulfurtransferase MOCS3"/>
    <property type="match status" value="1"/>
</dbReference>
<dbReference type="FunFam" id="3.40.50.720:FF:000033">
    <property type="entry name" value="Adenylyltransferase and sulfurtransferase MOCS3"/>
    <property type="match status" value="1"/>
</dbReference>
<dbReference type="Gene3D" id="3.40.50.720">
    <property type="entry name" value="NAD(P)-binding Rossmann-like Domain"/>
    <property type="match status" value="1"/>
</dbReference>
<dbReference type="Gene3D" id="3.40.250.10">
    <property type="entry name" value="Rhodanese-like domain"/>
    <property type="match status" value="1"/>
</dbReference>
<dbReference type="HAMAP" id="MF_03049">
    <property type="entry name" value="MOCS3_Uba4"/>
    <property type="match status" value="1"/>
</dbReference>
<dbReference type="InterPro" id="IPR028885">
    <property type="entry name" value="MOCS3/Uba4"/>
</dbReference>
<dbReference type="InterPro" id="IPR001763">
    <property type="entry name" value="Rhodanese-like_dom"/>
</dbReference>
<dbReference type="InterPro" id="IPR036873">
    <property type="entry name" value="Rhodanese-like_dom_sf"/>
</dbReference>
<dbReference type="InterPro" id="IPR045886">
    <property type="entry name" value="ThiF/MoeB/HesA"/>
</dbReference>
<dbReference type="InterPro" id="IPR000594">
    <property type="entry name" value="ThiF_NAD_FAD-bd"/>
</dbReference>
<dbReference type="InterPro" id="IPR035985">
    <property type="entry name" value="Ubiquitin-activating_enz"/>
</dbReference>
<dbReference type="PANTHER" id="PTHR10953:SF102">
    <property type="entry name" value="ADENYLYLTRANSFERASE AND SULFURTRANSFERASE MOCS3"/>
    <property type="match status" value="1"/>
</dbReference>
<dbReference type="PANTHER" id="PTHR10953">
    <property type="entry name" value="UBIQUITIN-ACTIVATING ENZYME E1"/>
    <property type="match status" value="1"/>
</dbReference>
<dbReference type="Pfam" id="PF00581">
    <property type="entry name" value="Rhodanese"/>
    <property type="match status" value="1"/>
</dbReference>
<dbReference type="Pfam" id="PF00899">
    <property type="entry name" value="ThiF"/>
    <property type="match status" value="1"/>
</dbReference>
<dbReference type="SMART" id="SM00450">
    <property type="entry name" value="RHOD"/>
    <property type="match status" value="1"/>
</dbReference>
<dbReference type="SUPFAM" id="SSF69572">
    <property type="entry name" value="Activating enzymes of the ubiquitin-like proteins"/>
    <property type="match status" value="1"/>
</dbReference>
<dbReference type="PROSITE" id="PS50206">
    <property type="entry name" value="RHODANESE_3"/>
    <property type="match status" value="1"/>
</dbReference>
<name>UBA4_YARLI</name>
<organism>
    <name type="scientific">Yarrowia lipolytica (strain CLIB 122 / E 150)</name>
    <name type="common">Yeast</name>
    <name type="synonym">Candida lipolytica</name>
    <dbReference type="NCBI Taxonomy" id="284591"/>
    <lineage>
        <taxon>Eukaryota</taxon>
        <taxon>Fungi</taxon>
        <taxon>Dikarya</taxon>
        <taxon>Ascomycota</taxon>
        <taxon>Saccharomycotina</taxon>
        <taxon>Dipodascomycetes</taxon>
        <taxon>Dipodascales</taxon>
        <taxon>Dipodascales incertae sedis</taxon>
        <taxon>Yarrowia</taxon>
    </lineage>
</organism>
<reference key="1">
    <citation type="journal article" date="2004" name="Nature">
        <title>Genome evolution in yeasts.</title>
        <authorList>
            <person name="Dujon B."/>
            <person name="Sherman D."/>
            <person name="Fischer G."/>
            <person name="Durrens P."/>
            <person name="Casaregola S."/>
            <person name="Lafontaine I."/>
            <person name="de Montigny J."/>
            <person name="Marck C."/>
            <person name="Neuveglise C."/>
            <person name="Talla E."/>
            <person name="Goffard N."/>
            <person name="Frangeul L."/>
            <person name="Aigle M."/>
            <person name="Anthouard V."/>
            <person name="Babour A."/>
            <person name="Barbe V."/>
            <person name="Barnay S."/>
            <person name="Blanchin S."/>
            <person name="Beckerich J.-M."/>
            <person name="Beyne E."/>
            <person name="Bleykasten C."/>
            <person name="Boisrame A."/>
            <person name="Boyer J."/>
            <person name="Cattolico L."/>
            <person name="Confanioleri F."/>
            <person name="de Daruvar A."/>
            <person name="Despons L."/>
            <person name="Fabre E."/>
            <person name="Fairhead C."/>
            <person name="Ferry-Dumazet H."/>
            <person name="Groppi A."/>
            <person name="Hantraye F."/>
            <person name="Hennequin C."/>
            <person name="Jauniaux N."/>
            <person name="Joyet P."/>
            <person name="Kachouri R."/>
            <person name="Kerrest A."/>
            <person name="Koszul R."/>
            <person name="Lemaire M."/>
            <person name="Lesur I."/>
            <person name="Ma L."/>
            <person name="Muller H."/>
            <person name="Nicaud J.-M."/>
            <person name="Nikolski M."/>
            <person name="Oztas S."/>
            <person name="Ozier-Kalogeropoulos O."/>
            <person name="Pellenz S."/>
            <person name="Potier S."/>
            <person name="Richard G.-F."/>
            <person name="Straub M.-L."/>
            <person name="Suleau A."/>
            <person name="Swennen D."/>
            <person name="Tekaia F."/>
            <person name="Wesolowski-Louvel M."/>
            <person name="Westhof E."/>
            <person name="Wirth B."/>
            <person name="Zeniou-Meyer M."/>
            <person name="Zivanovic Y."/>
            <person name="Bolotin-Fukuhara M."/>
            <person name="Thierry A."/>
            <person name="Bouchier C."/>
            <person name="Caudron B."/>
            <person name="Scarpelli C."/>
            <person name="Gaillardin C."/>
            <person name="Weissenbach J."/>
            <person name="Wincker P."/>
            <person name="Souciet J.-L."/>
        </authorList>
    </citation>
    <scope>NUCLEOTIDE SEQUENCE [LARGE SCALE GENOMIC DNA]</scope>
    <source>
        <strain>CLIB 122 / E 150</strain>
    </source>
</reference>
<evidence type="ECO:0000250" key="1">
    <source>
        <dbReference type="UniProtKB" id="P38820"/>
    </source>
</evidence>
<evidence type="ECO:0000255" key="2">
    <source>
        <dbReference type="HAMAP-Rule" id="MF_03049"/>
    </source>
</evidence>
<comment type="function">
    <text evidence="2">Plays a central role in 2-thiolation of mcm(5)S(2)U at tRNA wobble positions of cytosolic tRNA(Lys), tRNA(Glu) and tRNA(Gln). Acts by mediating the C-terminal thiocarboxylation of sulfur carrier URM1. Its N-terminus first activates URM1 as acyl-adenylate (-COAMP), then the persulfide sulfur on the catalytic cysteine is transferred to URM1 to form thiocarboxylation (-COSH) of its C-terminus. The reaction probably involves hydrogen sulfide that is generated from the persulfide intermediate and that acts as a nucleophile towards URM1. Subsequently, a transient disulfide bond is formed. Does not use thiosulfate as sulfur donor; NFS1 probably acting as a sulfur donor for thiocarboxylation reactions. Prior mcm(5) tRNA modification by the elongator complex is required for 2-thiolation. May also be involved in protein urmylation.</text>
</comment>
<comment type="cofactor">
    <cofactor evidence="2">
        <name>Zn(2+)</name>
        <dbReference type="ChEBI" id="CHEBI:29105"/>
    </cofactor>
    <text evidence="2">Binds 1 zinc ion per subunit.</text>
</comment>
<comment type="pathway">
    <text evidence="2">tRNA modification; 5-methoxycarbonylmethyl-2-thiouridine-tRNA biosynthesis.</text>
</comment>
<comment type="subcellular location">
    <subcellularLocation>
        <location evidence="1">Cytoplasm</location>
        <location evidence="1">Cytosol</location>
    </subcellularLocation>
</comment>
<comment type="similarity">
    <text evidence="2">In the N-terminal section; belongs to the HesA/MoeB/ThiF family. UBA4 subfamily.</text>
</comment>
<feature type="chain" id="PRO_0000369235" description="Adenylyltransferase and sulfurtransferase UBA4">
    <location>
        <begin position="1"/>
        <end position="396"/>
    </location>
</feature>
<feature type="domain" description="Rhodanese" evidence="2">
    <location>
        <begin position="305"/>
        <end position="394"/>
    </location>
</feature>
<feature type="active site" description="Glycyl thioester intermediate; for adenylyltransferase activity" evidence="2">
    <location>
        <position position="197"/>
    </location>
</feature>
<feature type="active site" description="Cysteine persulfide intermediate; for sulfurtransferase activity" evidence="2">
    <location>
        <position position="355"/>
    </location>
</feature>
<feature type="binding site" evidence="2">
    <location>
        <position position="51"/>
    </location>
    <ligand>
        <name>ATP</name>
        <dbReference type="ChEBI" id="CHEBI:30616"/>
    </ligand>
</feature>
<feature type="binding site" evidence="2">
    <location>
        <position position="72"/>
    </location>
    <ligand>
        <name>ATP</name>
        <dbReference type="ChEBI" id="CHEBI:30616"/>
    </ligand>
</feature>
<feature type="binding site" evidence="2">
    <location>
        <begin position="79"/>
        <end position="83"/>
    </location>
    <ligand>
        <name>ATP</name>
        <dbReference type="ChEBI" id="CHEBI:30616"/>
    </ligand>
</feature>
<feature type="binding site" evidence="2">
    <location>
        <position position="95"/>
    </location>
    <ligand>
        <name>ATP</name>
        <dbReference type="ChEBI" id="CHEBI:30616"/>
    </ligand>
</feature>
<feature type="binding site" evidence="2">
    <location>
        <begin position="139"/>
        <end position="140"/>
    </location>
    <ligand>
        <name>ATP</name>
        <dbReference type="ChEBI" id="CHEBI:30616"/>
    </ligand>
</feature>
<feature type="binding site" evidence="2">
    <location>
        <position position="180"/>
    </location>
    <ligand>
        <name>Zn(2+)</name>
        <dbReference type="ChEBI" id="CHEBI:29105"/>
    </ligand>
</feature>
<feature type="binding site" evidence="2">
    <location>
        <position position="183"/>
    </location>
    <ligand>
        <name>Zn(2+)</name>
        <dbReference type="ChEBI" id="CHEBI:29105"/>
    </ligand>
</feature>
<feature type="binding site" evidence="2">
    <location>
        <position position="257"/>
    </location>
    <ligand>
        <name>Zn(2+)</name>
        <dbReference type="ChEBI" id="CHEBI:29105"/>
    </ligand>
</feature>
<feature type="binding site" evidence="2">
    <location>
        <position position="260"/>
    </location>
    <ligand>
        <name>Zn(2+)</name>
        <dbReference type="ChEBI" id="CHEBI:29105"/>
    </ligand>
</feature>
<keyword id="KW-0067">ATP-binding</keyword>
<keyword id="KW-0963">Cytoplasm</keyword>
<keyword id="KW-0479">Metal-binding</keyword>
<keyword id="KW-0511">Multifunctional enzyme</keyword>
<keyword id="KW-0547">Nucleotide-binding</keyword>
<keyword id="KW-0548">Nucleotidyltransferase</keyword>
<keyword id="KW-1185">Reference proteome</keyword>
<keyword id="KW-0808">Transferase</keyword>
<keyword id="KW-0819">tRNA processing</keyword>
<keyword id="KW-0833">Ubl conjugation pathway</keyword>
<keyword id="KW-0862">Zinc</keyword>
<sequence>MDRSDSEKTDVLPMFKQEYGRYGRQMLVPEFGISGQLDLRSKRILVVGAGGLGSPAIQYLAGAGIGHITIIDDDTVEESNLHRQTIHAGNVNVPKSESAAEFVGKLNPCISVTPMVVRLSPSNSFSVFEGHDLVLDCTDGPAVRYLINDTAVLSGIPVVSASALKTEGQLSIYNYNGGPCYRCLFPIPPPADAVQTCGDGGIMGPVVGMMGMSQAMEAIKLLTGVYSESFTPFLMLYSAYNFPPWKSVKVRKRQKTCAACGDVPRISRQLIETGQVDYSEFCGSPSQVLLGEEHRITPEEYSKIVSTKHILLDVRERPQFDITSFPRSINIPWSELKHKEELDVQVDGSPVYVVCRYGNDSQNAVDKLQKLGIPSKDIKGGLYAWAKNVDEKFPIY</sequence>
<protein>
    <recommendedName>
        <fullName evidence="2">Adenylyltransferase and sulfurtransferase UBA4</fullName>
    </recommendedName>
    <alternativeName>
        <fullName evidence="2">Ubiquitin-like protein activator 4</fullName>
    </alternativeName>
    <domain>
        <recommendedName>
            <fullName evidence="2">Adenylyltransferase UBA4</fullName>
            <ecNumber evidence="2">2.7.7.-</ecNumber>
        </recommendedName>
    </domain>
    <domain>
        <recommendedName>
            <fullName evidence="2">Sulfurtransferase UBA4</fullName>
            <ecNumber evidence="2">2.8.1.-</ecNumber>
        </recommendedName>
    </domain>
</protein>
<proteinExistence type="inferred from homology"/>
<gene>
    <name evidence="2" type="primary">UBA4</name>
    <name type="ordered locus">YALI0C18095g</name>
</gene>